<comment type="subcellular location">
    <subcellularLocation>
        <location>Cell inner membrane</location>
        <topology>Multi-pass membrane protein</topology>
    </subcellularLocation>
</comment>
<comment type="sequence caution" evidence="2">
    <conflict type="erroneous initiation">
        <sequence resource="EMBL-CDS" id="AAB40213"/>
    </conflict>
</comment>
<name>YLAC_ECOLI</name>
<evidence type="ECO:0000255" key="1"/>
<evidence type="ECO:0000305" key="2"/>
<keyword id="KW-0997">Cell inner membrane</keyword>
<keyword id="KW-1003">Cell membrane</keyword>
<keyword id="KW-0472">Membrane</keyword>
<keyword id="KW-1185">Reference proteome</keyword>
<keyword id="KW-0812">Transmembrane</keyword>
<keyword id="KW-1133">Transmembrane helix</keyword>
<feature type="chain" id="PRO_0000168634" description="Inner membrane protein YlaC">
    <location>
        <begin position="1"/>
        <end position="156"/>
    </location>
</feature>
<feature type="topological domain" description="Cytoplasmic" evidence="1">
    <location>
        <begin position="1"/>
        <end position="35"/>
    </location>
</feature>
<feature type="transmembrane region" description="Helical" evidence="1">
    <location>
        <begin position="36"/>
        <end position="56"/>
    </location>
</feature>
<feature type="topological domain" description="Periplasmic" evidence="1">
    <location>
        <begin position="57"/>
        <end position="58"/>
    </location>
</feature>
<feature type="transmembrane region" description="Helical" evidence="1">
    <location>
        <begin position="59"/>
        <end position="79"/>
    </location>
</feature>
<feature type="topological domain" description="Cytoplasmic" evidence="1">
    <location>
        <begin position="80"/>
        <end position="156"/>
    </location>
</feature>
<gene>
    <name type="primary">ylaC</name>
    <name type="ordered locus">b0458</name>
    <name type="ordered locus">JW5063</name>
</gene>
<reference key="1">
    <citation type="submission" date="1997-01" db="EMBL/GenBank/DDBJ databases">
        <title>Sequence of minutes 4-25 of Escherichia coli.</title>
        <authorList>
            <person name="Chung E."/>
            <person name="Allen E."/>
            <person name="Araujo R."/>
            <person name="Aparicio A.M."/>
            <person name="Davis K."/>
            <person name="Duncan M."/>
            <person name="Federspiel N."/>
            <person name="Hyman R."/>
            <person name="Kalman S."/>
            <person name="Komp C."/>
            <person name="Kurdi O."/>
            <person name="Lew H."/>
            <person name="Lin D."/>
            <person name="Namath A."/>
            <person name="Oefner P."/>
            <person name="Roberts D."/>
            <person name="Schramm S."/>
            <person name="Davis R.W."/>
        </authorList>
    </citation>
    <scope>NUCLEOTIDE SEQUENCE [LARGE SCALE GENOMIC DNA]</scope>
    <source>
        <strain>K12 / MG1655 / ATCC 47076</strain>
    </source>
</reference>
<reference key="2">
    <citation type="journal article" date="1997" name="Science">
        <title>The complete genome sequence of Escherichia coli K-12.</title>
        <authorList>
            <person name="Blattner F.R."/>
            <person name="Plunkett G. III"/>
            <person name="Bloch C.A."/>
            <person name="Perna N.T."/>
            <person name="Burland V."/>
            <person name="Riley M."/>
            <person name="Collado-Vides J."/>
            <person name="Glasner J.D."/>
            <person name="Rode C.K."/>
            <person name="Mayhew G.F."/>
            <person name="Gregor J."/>
            <person name="Davis N.W."/>
            <person name="Kirkpatrick H.A."/>
            <person name="Goeden M.A."/>
            <person name="Rose D.J."/>
            <person name="Mau B."/>
            <person name="Shao Y."/>
        </authorList>
    </citation>
    <scope>NUCLEOTIDE SEQUENCE [LARGE SCALE GENOMIC DNA]</scope>
    <source>
        <strain>K12 / MG1655 / ATCC 47076</strain>
    </source>
</reference>
<reference key="3">
    <citation type="journal article" date="2006" name="Mol. Syst. Biol.">
        <title>Highly accurate genome sequences of Escherichia coli K-12 strains MG1655 and W3110.</title>
        <authorList>
            <person name="Hayashi K."/>
            <person name="Morooka N."/>
            <person name="Yamamoto Y."/>
            <person name="Fujita K."/>
            <person name="Isono K."/>
            <person name="Choi S."/>
            <person name="Ohtsubo E."/>
            <person name="Baba T."/>
            <person name="Wanner B.L."/>
            <person name="Mori H."/>
            <person name="Horiuchi T."/>
        </authorList>
    </citation>
    <scope>NUCLEOTIDE SEQUENCE [LARGE SCALE GENOMIC DNA]</scope>
    <source>
        <strain>K12 / W3110 / ATCC 27325 / DSM 5911</strain>
    </source>
</reference>
<reference key="4">
    <citation type="journal article" date="2005" name="Science">
        <title>Global topology analysis of the Escherichia coli inner membrane proteome.</title>
        <authorList>
            <person name="Daley D.O."/>
            <person name="Rapp M."/>
            <person name="Granseth E."/>
            <person name="Melen K."/>
            <person name="Drew D."/>
            <person name="von Heijne G."/>
        </authorList>
    </citation>
    <scope>TOPOLOGY [LARGE SCALE ANALYSIS]</scope>
    <source>
        <strain>K12 / MG1655 / ATCC 47076</strain>
    </source>
</reference>
<proteinExistence type="evidence at protein level"/>
<accession>P0AAS0</accession>
<accession>P77523</accession>
<accession>Q2MBW9</accession>
<organism>
    <name type="scientific">Escherichia coli (strain K12)</name>
    <dbReference type="NCBI Taxonomy" id="83333"/>
    <lineage>
        <taxon>Bacteria</taxon>
        <taxon>Pseudomonadati</taxon>
        <taxon>Pseudomonadota</taxon>
        <taxon>Gammaproteobacteria</taxon>
        <taxon>Enterobacterales</taxon>
        <taxon>Enterobacteriaceae</taxon>
        <taxon>Escherichia</taxon>
    </lineage>
</organism>
<dbReference type="EMBL" id="U82664">
    <property type="protein sequence ID" value="AAB40213.1"/>
    <property type="status" value="ALT_INIT"/>
    <property type="molecule type" value="Genomic_DNA"/>
</dbReference>
<dbReference type="EMBL" id="U00096">
    <property type="protein sequence ID" value="AAC73560.2"/>
    <property type="molecule type" value="Genomic_DNA"/>
</dbReference>
<dbReference type="EMBL" id="AP009048">
    <property type="protein sequence ID" value="BAE76237.1"/>
    <property type="molecule type" value="Genomic_DNA"/>
</dbReference>
<dbReference type="PIR" id="A64776">
    <property type="entry name" value="A64776"/>
</dbReference>
<dbReference type="RefSeq" id="NP_414991.4">
    <property type="nucleotide sequence ID" value="NC_000913.3"/>
</dbReference>
<dbReference type="RefSeq" id="WP_000136192.1">
    <property type="nucleotide sequence ID" value="NZ_STEB01000007.1"/>
</dbReference>
<dbReference type="BioGRID" id="4261749">
    <property type="interactions" value="6"/>
</dbReference>
<dbReference type="FunCoup" id="P0AAS0">
    <property type="interactions" value="17"/>
</dbReference>
<dbReference type="STRING" id="511145.b0458"/>
<dbReference type="jPOST" id="P0AAS0"/>
<dbReference type="PaxDb" id="511145-b0458"/>
<dbReference type="EnsemblBacteria" id="AAC73560">
    <property type="protein sequence ID" value="AAC73560"/>
    <property type="gene ID" value="b0458"/>
</dbReference>
<dbReference type="GeneID" id="948876"/>
<dbReference type="KEGG" id="ecj:JW5063"/>
<dbReference type="KEGG" id="eco:b0458"/>
<dbReference type="KEGG" id="ecoc:C3026_02245"/>
<dbReference type="PATRIC" id="fig|1411691.4.peg.1818"/>
<dbReference type="EchoBASE" id="EB3989"/>
<dbReference type="eggNOG" id="ENOG50328KF">
    <property type="taxonomic scope" value="Bacteria"/>
</dbReference>
<dbReference type="HOGENOM" id="CLU_134298_0_0_6"/>
<dbReference type="InParanoid" id="P0AAS0"/>
<dbReference type="OMA" id="VDFYDVY"/>
<dbReference type="OrthoDB" id="6504054at2"/>
<dbReference type="PhylomeDB" id="P0AAS0"/>
<dbReference type="BioCyc" id="EcoCyc:G6253-MONOMER"/>
<dbReference type="PRO" id="PR:P0AAS0"/>
<dbReference type="Proteomes" id="UP000000625">
    <property type="component" value="Chromosome"/>
</dbReference>
<dbReference type="GO" id="GO:0005886">
    <property type="term" value="C:plasma membrane"/>
    <property type="evidence" value="ECO:0000314"/>
    <property type="project" value="EcoCyc"/>
</dbReference>
<dbReference type="InterPro" id="IPR019713">
    <property type="entry name" value="Memb_YlaC"/>
</dbReference>
<dbReference type="Pfam" id="PF10777">
    <property type="entry name" value="YlaC"/>
    <property type="match status" value="1"/>
</dbReference>
<sequence>MTEIQRLLTETIESLNTREKRDNKPRFSISFIRKHPGLFIGMYVAFFATLAVMLQSETLSGSVWLLVVLFILLNGFFFFDVYPRYRYEDIDVLDFRVCYNGEWYNTRFVPAALVEAILNSPRVADVHKEQLQKMIVRKGELSFYDIFTLARAESTS</sequence>
<protein>
    <recommendedName>
        <fullName>Inner membrane protein YlaC</fullName>
    </recommendedName>
</protein>